<gene>
    <name type="ORF">C1/C2</name>
</gene>
<keyword id="KW-0025">Alternative splicing</keyword>
<keyword id="KW-0067">ATP-binding</keyword>
<keyword id="KW-0190">Covalent protein-DNA linkage</keyword>
<keyword id="KW-0235">DNA replication</keyword>
<keyword id="KW-0238">DNA-binding</keyword>
<keyword id="KW-0255">Endonuclease</keyword>
<keyword id="KW-0347">Helicase</keyword>
<keyword id="KW-1048">Host nucleus</keyword>
<keyword id="KW-0378">Hydrolase</keyword>
<keyword id="KW-0479">Metal-binding</keyword>
<keyword id="KW-0511">Multifunctional enzyme</keyword>
<keyword id="KW-0540">Nuclease</keyword>
<keyword id="KW-0547">Nucleotide-binding</keyword>
<keyword id="KW-0548">Nucleotidyltransferase</keyword>
<keyword id="KW-1185">Reference proteome</keyword>
<keyword id="KW-0678">Repressor</keyword>
<keyword id="KW-0808">Transferase</keyword>
<organism>
    <name type="scientific">Miscanthus streak virus (isolate 91)</name>
    <name type="common">MiSV</name>
    <dbReference type="NCBI Taxonomy" id="268776"/>
    <lineage>
        <taxon>Viruses</taxon>
        <taxon>Monodnaviria</taxon>
        <taxon>Shotokuvirae</taxon>
        <taxon>Cressdnaviricota</taxon>
        <taxon>Repensiviricetes</taxon>
        <taxon>Geplafuvirales</taxon>
        <taxon>Geminiviridae</taxon>
        <taxon>Mastrevirus</taxon>
        <taxon>Miscanthus streak virus</taxon>
    </lineage>
</organism>
<protein>
    <recommendedName>
        <fullName>Replication-associated protein</fullName>
        <shortName>Rep</shortName>
        <ecNumber>2.7.7.-</ecNumber>
        <ecNumber>3.1.21.-</ecNumber>
    </recommendedName>
</protein>
<accession>Q67590</accession>
<evidence type="ECO:0000250" key="1"/>
<evidence type="ECO:0000255" key="2"/>
<evidence type="ECO:0000255" key="3">
    <source>
        <dbReference type="PROSITE-ProRule" id="PRU01364"/>
    </source>
</evidence>
<evidence type="ECO:0000256" key="4">
    <source>
        <dbReference type="SAM" id="MobiDB-lite"/>
    </source>
</evidence>
<evidence type="ECO:0000305" key="5"/>
<reference key="1">
    <citation type="journal article" date="1991" name="J. Gen. Virol.">
        <title>The nucleotide sequence and genome structure of the geminivirus miscanthus streak virus.</title>
        <authorList>
            <person name="Chatani M."/>
            <person name="Matsumoto Y."/>
            <person name="Mizuta H."/>
            <person name="Ikegami M."/>
            <person name="Boulton M.I."/>
            <person name="Davies J.W."/>
        </authorList>
    </citation>
    <scope>NUCLEOTIDE SEQUENCE [GENOMIC DNA]</scope>
</reference>
<sequence length="348" mass="40318">MRAPASSAASNRPGPSNHPTPRWNSKQFFLTYPHCNLTPSELMKELFSRLTEKIPGYIKVSQEFHKDGDPHLHVLIQLNTKLCTRNPKFFDVQGFHPNIQPVRDAEKVFGYISKTNGDSDEMGELQLRIKKPEKPTRDQRMAMIIASSTNRNEYLSMVRKEFPFDWAIRLQQFEYSAAALFTEPPPVYQSPFPNEQIVCPPELVDIIDQEWNQQPNGPRRPRSIYICGPSRTGKTTWARNIGRHNYYNSTVDFTHYDKDAIYNVIDDVPFKFLPQWKALVGAQRDYIVNPKYGKKKKIPGGIPSIILTNDDEDWIKDMKPAQVEYLHANAHVHYMYEGQKFYVLPAEE</sequence>
<feature type="chain" id="PRO_0000316940" description="Replication-associated protein">
    <location>
        <begin position="1"/>
        <end position="348"/>
    </location>
</feature>
<feature type="domain" description="CRESS-DNA virus Rep endonuclease" evidence="3">
    <location>
        <begin position="22"/>
        <end position="125"/>
    </location>
</feature>
<feature type="region of interest" description="Disordered" evidence="4">
    <location>
        <begin position="1"/>
        <end position="22"/>
    </location>
</feature>
<feature type="region of interest" description="Oligomerization" evidence="1">
    <location>
        <begin position="176"/>
        <end position="188"/>
    </location>
</feature>
<feature type="region of interest" description="Transactivation" evidence="1">
    <location>
        <begin position="251"/>
        <end position="269"/>
    </location>
</feature>
<feature type="short sequence motif" description="RCR-1" evidence="3">
    <location>
        <begin position="29"/>
        <end position="32"/>
    </location>
</feature>
<feature type="short sequence motif" description="RCR-2" evidence="3">
    <location>
        <begin position="71"/>
        <end position="73"/>
    </location>
</feature>
<feature type="short sequence motif" description="RCR-3" evidence="3">
    <location>
        <begin position="111"/>
        <end position="114"/>
    </location>
</feature>
<feature type="short sequence motif" description="Nuclear localization signal" evidence="2">
    <location>
        <begin position="291"/>
        <end position="301"/>
    </location>
</feature>
<feature type="compositionally biased region" description="Low complexity" evidence="4">
    <location>
        <begin position="1"/>
        <end position="17"/>
    </location>
</feature>
<feature type="active site" description="For DNA cleavage activity" evidence="3">
    <location>
        <position position="111"/>
    </location>
</feature>
<feature type="binding site" evidence="2">
    <location>
        <position position="63"/>
    </location>
    <ligand>
        <name>a divalent metal cation</name>
        <dbReference type="ChEBI" id="CHEBI:60240"/>
    </ligand>
</feature>
<feature type="binding site" evidence="2">
    <location>
        <position position="71"/>
    </location>
    <ligand>
        <name>a divalent metal cation</name>
        <dbReference type="ChEBI" id="CHEBI:60240"/>
    </ligand>
</feature>
<feature type="binding site" evidence="2">
    <location>
        <position position="73"/>
    </location>
    <ligand>
        <name>a divalent metal cation</name>
        <dbReference type="ChEBI" id="CHEBI:60240"/>
    </ligand>
</feature>
<feature type="binding site" evidence="2">
    <location>
        <begin position="228"/>
        <end position="235"/>
    </location>
    <ligand>
        <name>ATP</name>
        <dbReference type="ChEBI" id="CHEBI:30616"/>
    </ligand>
</feature>
<proteinExistence type="inferred from homology"/>
<dbReference type="EC" id="2.7.7.-"/>
<dbReference type="EC" id="3.1.21.-"/>
<dbReference type="EMBL" id="D01030">
    <property type="protein sequence ID" value="BAA00834.1"/>
    <property type="status" value="ALT_SEQ"/>
    <property type="molecule type" value="Genomic_DNA"/>
</dbReference>
<dbReference type="EMBL" id="D01030">
    <property type="protein sequence ID" value="BAA00835.1"/>
    <property type="status" value="ALT_SEQ"/>
    <property type="molecule type" value="Genomic_DNA"/>
</dbReference>
<dbReference type="PIR" id="JQ1359">
    <property type="entry name" value="JQ1359"/>
</dbReference>
<dbReference type="RefSeq" id="NP_569146.1">
    <property type="nucleotide sequence ID" value="NC_003379.1"/>
</dbReference>
<dbReference type="RefSeq" id="NP_569147.1">
    <property type="nucleotide sequence ID" value="NC_003379.1"/>
</dbReference>
<dbReference type="SMR" id="Q67590"/>
<dbReference type="KEGG" id="vg:932215"/>
<dbReference type="KEGG" id="vg:932216"/>
<dbReference type="OrthoDB" id="9195at10239"/>
<dbReference type="Proteomes" id="UP000008874">
    <property type="component" value="Genome"/>
</dbReference>
<dbReference type="GO" id="GO:0042025">
    <property type="term" value="C:host cell nucleus"/>
    <property type="evidence" value="ECO:0007669"/>
    <property type="project" value="UniProtKB-SubCell"/>
</dbReference>
<dbReference type="GO" id="GO:0005524">
    <property type="term" value="F:ATP binding"/>
    <property type="evidence" value="ECO:0007669"/>
    <property type="project" value="UniProtKB-KW"/>
</dbReference>
<dbReference type="GO" id="GO:0003677">
    <property type="term" value="F:DNA binding"/>
    <property type="evidence" value="ECO:0007669"/>
    <property type="project" value="UniProtKB-KW"/>
</dbReference>
<dbReference type="GO" id="GO:0016888">
    <property type="term" value="F:endodeoxyribonuclease activity, producing 5'-phosphomonoesters"/>
    <property type="evidence" value="ECO:0007669"/>
    <property type="project" value="InterPro"/>
</dbReference>
<dbReference type="GO" id="GO:0004386">
    <property type="term" value="F:helicase activity"/>
    <property type="evidence" value="ECO:0007669"/>
    <property type="project" value="UniProtKB-KW"/>
</dbReference>
<dbReference type="GO" id="GO:0046872">
    <property type="term" value="F:metal ion binding"/>
    <property type="evidence" value="ECO:0007669"/>
    <property type="project" value="UniProtKB-KW"/>
</dbReference>
<dbReference type="GO" id="GO:0016779">
    <property type="term" value="F:nucleotidyltransferase activity"/>
    <property type="evidence" value="ECO:0007669"/>
    <property type="project" value="UniProtKB-KW"/>
</dbReference>
<dbReference type="GO" id="GO:0005198">
    <property type="term" value="F:structural molecule activity"/>
    <property type="evidence" value="ECO:0007669"/>
    <property type="project" value="InterPro"/>
</dbReference>
<dbReference type="GO" id="GO:0006260">
    <property type="term" value="P:DNA replication"/>
    <property type="evidence" value="ECO:0007669"/>
    <property type="project" value="UniProtKB-KW"/>
</dbReference>
<dbReference type="Gene3D" id="3.40.1310.20">
    <property type="match status" value="1"/>
</dbReference>
<dbReference type="InterPro" id="IPR049912">
    <property type="entry name" value="CRESS_DNA_REP"/>
</dbReference>
<dbReference type="InterPro" id="IPR001301">
    <property type="entry name" value="Gemini_AL1_CLV"/>
</dbReference>
<dbReference type="InterPro" id="IPR001191">
    <property type="entry name" value="Gemini_AL1_REP"/>
</dbReference>
<dbReference type="InterPro" id="IPR022692">
    <property type="entry name" value="Gemini_AL1_REP_central"/>
</dbReference>
<dbReference type="InterPro" id="IPR027417">
    <property type="entry name" value="P-loop_NTPase"/>
</dbReference>
<dbReference type="Pfam" id="PF00799">
    <property type="entry name" value="Gemini_AL1"/>
    <property type="match status" value="1"/>
</dbReference>
<dbReference type="Pfam" id="PF08283">
    <property type="entry name" value="Gemini_AL1_M"/>
    <property type="match status" value="1"/>
</dbReference>
<dbReference type="PRINTS" id="PR00227">
    <property type="entry name" value="GEMCOATAL1"/>
</dbReference>
<dbReference type="PRINTS" id="PR00228">
    <property type="entry name" value="GEMCOATCLVL1"/>
</dbReference>
<dbReference type="SUPFAM" id="SSF55464">
    <property type="entry name" value="Origin of replication-binding domain, RBD-like"/>
    <property type="match status" value="1"/>
</dbReference>
<dbReference type="SUPFAM" id="SSF52540">
    <property type="entry name" value="P-loop containing nucleoside triphosphate hydrolases"/>
    <property type="match status" value="1"/>
</dbReference>
<dbReference type="PROSITE" id="PS52020">
    <property type="entry name" value="CRESS_DNA_REP"/>
    <property type="match status" value="1"/>
</dbReference>
<comment type="function">
    <text evidence="1">Essential for the replication of viral ssDNA. The closed circular ssDNA genome is first converted to a superhelical dsDNA. Rep binds a specific region at the genome origin of replication. It introduces an endonucleolytic nick within the conserved sequence 5'-TAATATTAC-3' in the intergenic region of the genome present in all geminiviruses, thereby initiating the rolling circle replication (RCR). Following cleavage, binds covalently to the 5'-phosphate of DNA as a tyrosyl ester. The cleavage gives rise to a free 3'-OH that serves as a primer for the cellular DNA polymerase. The polymerase synthesizes the (+) strand DNA by rolling circle mechanism. After one round of replication, a Rep-catalyzed nucleotidyl transfer reaction releases a circular single-stranded virus genome, thereby terminating the replication. Displays origin-specific DNA cleavage, nucleotidyl transferase, ATPase and helicase activities. Acts as an inhibitor of C-sense gene transcription (By similarity).</text>
</comment>
<comment type="cofactor">
    <cofactor evidence="1">
        <name>Mg(2+)</name>
        <dbReference type="ChEBI" id="CHEBI:18420"/>
    </cofactor>
    <cofactor evidence="1">
        <name>Mn(2+)</name>
        <dbReference type="ChEBI" id="CHEBI:29035"/>
    </cofactor>
    <text evidence="1">Divalent metal cations, possibly Mg(2+) or Mn(2+).</text>
</comment>
<comment type="subunit">
    <text>Homooligomer. Rep binds to repeated DNA motifs (iterons). Forms the O-complex, which is a Rep-DNA complex involved in the initiation of RCR. Part of the C- and V-complexes which are RepA-Rep-DNA complexes involved in the c-sense and v-sense transcription.</text>
</comment>
<comment type="subcellular location">
    <subcellularLocation>
        <location evidence="1">Host nucleus</location>
    </subcellularLocation>
</comment>
<comment type="alternative products">
    <event type="alternative splicing"/>
    <isoform>
        <id>Q67590-1</id>
        <name>Rep</name>
        <sequence type="displayed"/>
    </isoform>
    <isoform>
        <id>Q67591-1</id>
        <name>RepA</name>
        <sequence type="external"/>
    </isoform>
</comment>
<comment type="domain">
    <text>There are 3 rolling circle replication (RCR) motifs. RCR-2 is probably involved in metal coordination. RCR-3 is required for phosphodiester bond cleavage for initiation of RCR.</text>
</comment>
<comment type="similarity">
    <text evidence="5">Belongs to the geminiviridae Rep protein family.</text>
</comment>
<comment type="sequence caution" evidence="5">
    <conflict type="erroneous gene model prediction">
        <sequence resource="EMBL-CDS" id="BAA00834"/>
    </conflict>
</comment>
<comment type="sequence caution" evidence="5">
    <conflict type="erroneous gene model prediction">
        <sequence resource="EMBL-CDS" id="BAA00835"/>
    </conflict>
</comment>
<name>REP_MISV9</name>
<organismHost>
    <name type="scientific">Miscanthus sacchariflorus</name>
    <dbReference type="NCBI Taxonomy" id="183675"/>
</organismHost>